<name>UBA4_ASPFU</name>
<proteinExistence type="inferred from homology"/>
<protein>
    <recommendedName>
        <fullName evidence="3">Adenylyltransferase and sulfurtransferase uba4</fullName>
    </recommendedName>
    <alternativeName>
        <fullName evidence="3">Common component for nitrate reductase and xanthine dehydrogenase protein F</fullName>
    </alternativeName>
    <alternativeName>
        <fullName evidence="3">Ubiquitin-like protein activator 4</fullName>
    </alternativeName>
    <domain>
        <recommendedName>
            <fullName evidence="3">Molybdopterin-synthase adenylyltransferase</fullName>
            <ecNumber evidence="3">2.7.7.80</ecNumber>
        </recommendedName>
        <alternativeName>
            <fullName evidence="3">Adenylyltransferase uba4</fullName>
        </alternativeName>
        <alternativeName>
            <fullName evidence="3">Sulfur carrier protein MOCS2A adenylyltransferase</fullName>
        </alternativeName>
    </domain>
    <domain>
        <recommendedName>
            <fullName evidence="3">Molybdopterin-synthase sulfurtransferase</fullName>
            <ecNumber evidence="3">2.8.1.11</ecNumber>
        </recommendedName>
        <alternativeName>
            <fullName evidence="3">Sulfur carrier protein MOCS2A sulfurtransferase</fullName>
        </alternativeName>
        <alternativeName>
            <fullName evidence="3">Sulfurtransferase uba4</fullName>
        </alternativeName>
    </domain>
</protein>
<gene>
    <name evidence="3" type="primary">uba4</name>
    <name evidence="3" type="synonym">cnxF</name>
    <name type="ORF">AFUA_5G10480</name>
</gene>
<dbReference type="EC" id="2.7.7.80" evidence="3"/>
<dbReference type="EC" id="2.8.1.11" evidence="3"/>
<dbReference type="EMBL" id="AAHF01000003">
    <property type="protein sequence ID" value="EAL91557.1"/>
    <property type="molecule type" value="Genomic_DNA"/>
</dbReference>
<dbReference type="RefSeq" id="XP_753595.1">
    <property type="nucleotide sequence ID" value="XM_748502.1"/>
</dbReference>
<dbReference type="SMR" id="Q4WV19"/>
<dbReference type="FunCoup" id="Q4WV19">
    <property type="interactions" value="850"/>
</dbReference>
<dbReference type="STRING" id="330879.Q4WV19"/>
<dbReference type="EnsemblFungi" id="EAL91557">
    <property type="protein sequence ID" value="EAL91557"/>
    <property type="gene ID" value="AFUA_5G10480"/>
</dbReference>
<dbReference type="GeneID" id="3511412"/>
<dbReference type="KEGG" id="afm:AFUA_5G10480"/>
<dbReference type="VEuPathDB" id="FungiDB:Afu5g10480"/>
<dbReference type="eggNOG" id="KOG2017">
    <property type="taxonomic scope" value="Eukaryota"/>
</dbReference>
<dbReference type="HOGENOM" id="CLU_013325_1_2_1"/>
<dbReference type="InParanoid" id="Q4WV19"/>
<dbReference type="OMA" id="IPDVGMD"/>
<dbReference type="OrthoDB" id="10261062at2759"/>
<dbReference type="UniPathway" id="UPA00344"/>
<dbReference type="UniPathway" id="UPA00988"/>
<dbReference type="Proteomes" id="UP000002530">
    <property type="component" value="Chromosome 5"/>
</dbReference>
<dbReference type="GO" id="GO:0005737">
    <property type="term" value="C:cytoplasm"/>
    <property type="evidence" value="ECO:0000318"/>
    <property type="project" value="GO_Central"/>
</dbReference>
<dbReference type="GO" id="GO:0005829">
    <property type="term" value="C:cytosol"/>
    <property type="evidence" value="ECO:0007669"/>
    <property type="project" value="InterPro"/>
</dbReference>
<dbReference type="GO" id="GO:0070733">
    <property type="term" value="F:AMPylase activity"/>
    <property type="evidence" value="ECO:0007669"/>
    <property type="project" value="EnsemblFungi"/>
</dbReference>
<dbReference type="GO" id="GO:0005524">
    <property type="term" value="F:ATP binding"/>
    <property type="evidence" value="ECO:0007669"/>
    <property type="project" value="UniProtKB-KW"/>
</dbReference>
<dbReference type="GO" id="GO:0042802">
    <property type="term" value="F:identical protein binding"/>
    <property type="evidence" value="ECO:0007669"/>
    <property type="project" value="EnsemblFungi"/>
</dbReference>
<dbReference type="GO" id="GO:0046872">
    <property type="term" value="F:metal ion binding"/>
    <property type="evidence" value="ECO:0007669"/>
    <property type="project" value="UniProtKB-KW"/>
</dbReference>
<dbReference type="GO" id="GO:0061605">
    <property type="term" value="F:molybdopterin-synthase adenylyltransferase activity"/>
    <property type="evidence" value="ECO:0007669"/>
    <property type="project" value="UniProtKB-EC"/>
</dbReference>
<dbReference type="GO" id="GO:0061604">
    <property type="term" value="F:molybdopterin-synthase sulfurtransferase activity"/>
    <property type="evidence" value="ECO:0007669"/>
    <property type="project" value="UniProtKB-EC"/>
</dbReference>
<dbReference type="GO" id="GO:0016779">
    <property type="term" value="F:nucleotidyltransferase activity"/>
    <property type="evidence" value="ECO:0000318"/>
    <property type="project" value="GO_Central"/>
</dbReference>
<dbReference type="GO" id="GO:0004792">
    <property type="term" value="F:thiosulfate-cyanide sulfurtransferase activity"/>
    <property type="evidence" value="ECO:0000318"/>
    <property type="project" value="GO_Central"/>
</dbReference>
<dbReference type="GO" id="GO:0042292">
    <property type="term" value="F:URM1 activating enzyme activity"/>
    <property type="evidence" value="ECO:0000318"/>
    <property type="project" value="GO_Central"/>
</dbReference>
<dbReference type="GO" id="GO:0007114">
    <property type="term" value="P:cell budding"/>
    <property type="evidence" value="ECO:0007669"/>
    <property type="project" value="EnsemblFungi"/>
</dbReference>
<dbReference type="GO" id="GO:0034599">
    <property type="term" value="P:cellular response to oxidative stress"/>
    <property type="evidence" value="ECO:0007669"/>
    <property type="project" value="EnsemblFungi"/>
</dbReference>
<dbReference type="GO" id="GO:0001403">
    <property type="term" value="P:invasive growth in response to glucose limitation"/>
    <property type="evidence" value="ECO:0007669"/>
    <property type="project" value="EnsemblFungi"/>
</dbReference>
<dbReference type="GO" id="GO:0006777">
    <property type="term" value="P:Mo-molybdopterin cofactor biosynthetic process"/>
    <property type="evidence" value="ECO:0007669"/>
    <property type="project" value="UniProtKB-UniRule"/>
</dbReference>
<dbReference type="GO" id="GO:0032447">
    <property type="term" value="P:protein urmylation"/>
    <property type="evidence" value="ECO:0000318"/>
    <property type="project" value="GO_Central"/>
</dbReference>
<dbReference type="GO" id="GO:2000220">
    <property type="term" value="P:regulation of pseudohyphal growth"/>
    <property type="evidence" value="ECO:0007669"/>
    <property type="project" value="EnsemblFungi"/>
</dbReference>
<dbReference type="GO" id="GO:0002143">
    <property type="term" value="P:tRNA wobble position uridine thiolation"/>
    <property type="evidence" value="ECO:0000318"/>
    <property type="project" value="GO_Central"/>
</dbReference>
<dbReference type="CDD" id="cd00757">
    <property type="entry name" value="ThiF_MoeB_HesA_family"/>
    <property type="match status" value="1"/>
</dbReference>
<dbReference type="FunFam" id="3.40.50.720:FF:000033">
    <property type="entry name" value="Adenylyltransferase and sulfurtransferase MOCS3"/>
    <property type="match status" value="1"/>
</dbReference>
<dbReference type="FunFam" id="3.40.250.10:FF:000096">
    <property type="entry name" value="Adenylyltransferase and sulfurtransferase uba4"/>
    <property type="match status" value="1"/>
</dbReference>
<dbReference type="Gene3D" id="3.40.50.720">
    <property type="entry name" value="NAD(P)-binding Rossmann-like Domain"/>
    <property type="match status" value="1"/>
</dbReference>
<dbReference type="Gene3D" id="3.40.250.10">
    <property type="entry name" value="Rhodanese-like domain"/>
    <property type="match status" value="1"/>
</dbReference>
<dbReference type="HAMAP" id="MF_03049">
    <property type="entry name" value="MOCS3_Uba4"/>
    <property type="match status" value="1"/>
</dbReference>
<dbReference type="InterPro" id="IPR028885">
    <property type="entry name" value="MOCS3/Uba4"/>
</dbReference>
<dbReference type="InterPro" id="IPR001763">
    <property type="entry name" value="Rhodanese-like_dom"/>
</dbReference>
<dbReference type="InterPro" id="IPR036873">
    <property type="entry name" value="Rhodanese-like_dom_sf"/>
</dbReference>
<dbReference type="InterPro" id="IPR045886">
    <property type="entry name" value="ThiF/MoeB/HesA"/>
</dbReference>
<dbReference type="InterPro" id="IPR000594">
    <property type="entry name" value="ThiF_NAD_FAD-bd"/>
</dbReference>
<dbReference type="InterPro" id="IPR035985">
    <property type="entry name" value="Ubiquitin-activating_enz"/>
</dbReference>
<dbReference type="PANTHER" id="PTHR10953:SF102">
    <property type="entry name" value="ADENYLYLTRANSFERASE AND SULFURTRANSFERASE MOCS3"/>
    <property type="match status" value="1"/>
</dbReference>
<dbReference type="PANTHER" id="PTHR10953">
    <property type="entry name" value="UBIQUITIN-ACTIVATING ENZYME E1"/>
    <property type="match status" value="1"/>
</dbReference>
<dbReference type="Pfam" id="PF00581">
    <property type="entry name" value="Rhodanese"/>
    <property type="match status" value="1"/>
</dbReference>
<dbReference type="Pfam" id="PF00899">
    <property type="entry name" value="ThiF"/>
    <property type="match status" value="1"/>
</dbReference>
<dbReference type="SMART" id="SM00450">
    <property type="entry name" value="RHOD"/>
    <property type="match status" value="1"/>
</dbReference>
<dbReference type="SUPFAM" id="SSF69572">
    <property type="entry name" value="Activating enzymes of the ubiquitin-like proteins"/>
    <property type="match status" value="1"/>
</dbReference>
<dbReference type="PROSITE" id="PS50206">
    <property type="entry name" value="RHODANESE_3"/>
    <property type="match status" value="1"/>
</dbReference>
<reference key="1">
    <citation type="journal article" date="2005" name="Nature">
        <title>Genomic sequence of the pathogenic and allergenic filamentous fungus Aspergillus fumigatus.</title>
        <authorList>
            <person name="Nierman W.C."/>
            <person name="Pain A."/>
            <person name="Anderson M.J."/>
            <person name="Wortman J.R."/>
            <person name="Kim H.S."/>
            <person name="Arroyo J."/>
            <person name="Berriman M."/>
            <person name="Abe K."/>
            <person name="Archer D.B."/>
            <person name="Bermejo C."/>
            <person name="Bennett J.W."/>
            <person name="Bowyer P."/>
            <person name="Chen D."/>
            <person name="Collins M."/>
            <person name="Coulsen R."/>
            <person name="Davies R."/>
            <person name="Dyer P.S."/>
            <person name="Farman M.L."/>
            <person name="Fedorova N."/>
            <person name="Fedorova N.D."/>
            <person name="Feldblyum T.V."/>
            <person name="Fischer R."/>
            <person name="Fosker N."/>
            <person name="Fraser A."/>
            <person name="Garcia J.L."/>
            <person name="Garcia M.J."/>
            <person name="Goble A."/>
            <person name="Goldman G.H."/>
            <person name="Gomi K."/>
            <person name="Griffith-Jones S."/>
            <person name="Gwilliam R."/>
            <person name="Haas B.J."/>
            <person name="Haas H."/>
            <person name="Harris D.E."/>
            <person name="Horiuchi H."/>
            <person name="Huang J."/>
            <person name="Humphray S."/>
            <person name="Jimenez J."/>
            <person name="Keller N."/>
            <person name="Khouri H."/>
            <person name="Kitamoto K."/>
            <person name="Kobayashi T."/>
            <person name="Konzack S."/>
            <person name="Kulkarni R."/>
            <person name="Kumagai T."/>
            <person name="Lafton A."/>
            <person name="Latge J.-P."/>
            <person name="Li W."/>
            <person name="Lord A."/>
            <person name="Lu C."/>
            <person name="Majoros W.H."/>
            <person name="May G.S."/>
            <person name="Miller B.L."/>
            <person name="Mohamoud Y."/>
            <person name="Molina M."/>
            <person name="Monod M."/>
            <person name="Mouyna I."/>
            <person name="Mulligan S."/>
            <person name="Murphy L.D."/>
            <person name="O'Neil S."/>
            <person name="Paulsen I."/>
            <person name="Penalva M.A."/>
            <person name="Pertea M."/>
            <person name="Price C."/>
            <person name="Pritchard B.L."/>
            <person name="Quail M.A."/>
            <person name="Rabbinowitsch E."/>
            <person name="Rawlins N."/>
            <person name="Rajandream M.A."/>
            <person name="Reichard U."/>
            <person name="Renauld H."/>
            <person name="Robson G.D."/>
            <person name="Rodriguez de Cordoba S."/>
            <person name="Rodriguez-Pena J.M."/>
            <person name="Ronning C.M."/>
            <person name="Rutter S."/>
            <person name="Salzberg S.L."/>
            <person name="Sanchez M."/>
            <person name="Sanchez-Ferrero J.C."/>
            <person name="Saunders D."/>
            <person name="Seeger K."/>
            <person name="Squares R."/>
            <person name="Squares S."/>
            <person name="Takeuchi M."/>
            <person name="Tekaia F."/>
            <person name="Turner G."/>
            <person name="Vazquez de Aldana C.R."/>
            <person name="Weidman J."/>
            <person name="White O."/>
            <person name="Woodward J.R."/>
            <person name="Yu J.-H."/>
            <person name="Fraser C.M."/>
            <person name="Galagan J.E."/>
            <person name="Asai K."/>
            <person name="Machida M."/>
            <person name="Hall N."/>
            <person name="Barrell B.G."/>
            <person name="Denning D.W."/>
        </authorList>
    </citation>
    <scope>NUCLEOTIDE SEQUENCE [LARGE SCALE GENOMIC DNA]</scope>
    <source>
        <strain>ATCC MYA-4609 / CBS 101355 / FGSC A1100 / Af293</strain>
    </source>
</reference>
<organism>
    <name type="scientific">Aspergillus fumigatus (strain ATCC MYA-4609 / CBS 101355 / FGSC A1100 / Af293)</name>
    <name type="common">Neosartorya fumigata</name>
    <dbReference type="NCBI Taxonomy" id="330879"/>
    <lineage>
        <taxon>Eukaryota</taxon>
        <taxon>Fungi</taxon>
        <taxon>Dikarya</taxon>
        <taxon>Ascomycota</taxon>
        <taxon>Pezizomycotina</taxon>
        <taxon>Eurotiomycetes</taxon>
        <taxon>Eurotiomycetidae</taxon>
        <taxon>Eurotiales</taxon>
        <taxon>Aspergillaceae</taxon>
        <taxon>Aspergillus</taxon>
        <taxon>Aspergillus subgen. Fumigati</taxon>
    </lineage>
</organism>
<evidence type="ECO:0000250" key="1"/>
<evidence type="ECO:0000250" key="2">
    <source>
        <dbReference type="UniProtKB" id="P38820"/>
    </source>
</evidence>
<evidence type="ECO:0000255" key="3">
    <source>
        <dbReference type="HAMAP-Rule" id="MF_03049"/>
    </source>
</evidence>
<keyword id="KW-0067">ATP-binding</keyword>
<keyword id="KW-0963">Cytoplasm</keyword>
<keyword id="KW-0479">Metal-binding</keyword>
<keyword id="KW-0501">Molybdenum cofactor biosynthesis</keyword>
<keyword id="KW-0511">Multifunctional enzyme</keyword>
<keyword id="KW-0547">Nucleotide-binding</keyword>
<keyword id="KW-0548">Nucleotidyltransferase</keyword>
<keyword id="KW-1185">Reference proteome</keyword>
<keyword id="KW-0808">Transferase</keyword>
<keyword id="KW-0819">tRNA processing</keyword>
<keyword id="KW-0833">Ubl conjugation pathway</keyword>
<keyword id="KW-0862">Zinc</keyword>
<comment type="function">
    <text evidence="1">Plays a central role in 2-thiolation of mcm(5)S(2)U at tRNA wobble positions of cytosolic tRNA(Lys), tRNA(Glu) and tRNA(Gln). Also essential during biosynthesis of the molybdenum cofactor. Acts by mediating the C-terminal thiocarboxylation of sulfur carriers urm1 and mocs2a. Its N-terminus first activates urm1 and mocs2a as acyl-adenylates (-COAMP), then the persulfide sulfur on the catalytic cysteine is transferred to urm1 and mocs2a to form thiocarboxylation (-COSH) of their C-terminus. The reaction probably involves hydrogen sulfide that is generated from the persulfide intermediate and that acts as a nucleophile towards urm1 and mocs2a. Subsequently, a transient disulfide bond is formed. Does not use thiosulfate as sulfur donor; nfs1 probably acting as a sulfur donor for thiocarboxylation reactions (By similarity).</text>
</comment>
<comment type="catalytic activity">
    <reaction evidence="3">
        <text>[molybdopterin-synthase sulfur-carrier protein]-C-terminal Gly-Gly + ATP + H(+) = [molybdopterin-synthase sulfur-carrier protein]-C-terminal Gly-Gly-AMP + diphosphate</text>
        <dbReference type="Rhea" id="RHEA:43616"/>
        <dbReference type="Rhea" id="RHEA-COMP:12159"/>
        <dbReference type="Rhea" id="RHEA-COMP:12202"/>
        <dbReference type="ChEBI" id="CHEBI:15378"/>
        <dbReference type="ChEBI" id="CHEBI:30616"/>
        <dbReference type="ChEBI" id="CHEBI:33019"/>
        <dbReference type="ChEBI" id="CHEBI:90618"/>
        <dbReference type="ChEBI" id="CHEBI:90778"/>
        <dbReference type="EC" id="2.7.7.80"/>
    </reaction>
</comment>
<comment type="catalytic activity">
    <reaction evidence="3">
        <text>[molybdopterin-synthase sulfur-carrier protein]-C-terminal Gly-Gly-AMP + S-sulfanyl-L-cysteinyl-[cysteine desulfurase] + AH2 = [molybdopterin-synthase sulfur-carrier protein]-C-terminal-Gly-aminoethanethioate + L-cysteinyl-[cysteine desulfurase] + A + AMP + 2 H(+)</text>
        <dbReference type="Rhea" id="RHEA:48612"/>
        <dbReference type="Rhea" id="RHEA-COMP:12157"/>
        <dbReference type="Rhea" id="RHEA-COMP:12158"/>
        <dbReference type="Rhea" id="RHEA-COMP:12159"/>
        <dbReference type="Rhea" id="RHEA-COMP:19907"/>
        <dbReference type="ChEBI" id="CHEBI:13193"/>
        <dbReference type="ChEBI" id="CHEBI:15378"/>
        <dbReference type="ChEBI" id="CHEBI:17499"/>
        <dbReference type="ChEBI" id="CHEBI:29950"/>
        <dbReference type="ChEBI" id="CHEBI:61963"/>
        <dbReference type="ChEBI" id="CHEBI:90618"/>
        <dbReference type="ChEBI" id="CHEBI:232372"/>
        <dbReference type="ChEBI" id="CHEBI:456215"/>
        <dbReference type="EC" id="2.8.1.11"/>
    </reaction>
</comment>
<comment type="cofactor">
    <cofactor evidence="3">
        <name>Zn(2+)</name>
        <dbReference type="ChEBI" id="CHEBI:29105"/>
    </cofactor>
    <text evidence="3">Binds 1 zinc ion per subunit.</text>
</comment>
<comment type="pathway">
    <text evidence="3">tRNA modification; 5-methoxycarbonylmethyl-2-thiouridine-tRNA biosynthesis.</text>
</comment>
<comment type="pathway">
    <text evidence="3">Cofactor biosynthesis; molybdopterin biosynthesis.</text>
</comment>
<comment type="subcellular location">
    <subcellularLocation>
        <location evidence="2">Cytoplasm</location>
        <location evidence="2">Cytosol</location>
    </subcellularLocation>
</comment>
<comment type="similarity">
    <text evidence="3">In the N-terminal section; belongs to the HesA/MoeB/ThiF family. UBA4 subfamily.</text>
</comment>
<accession>Q4WV19</accession>
<feature type="chain" id="PRO_0000369219" description="Adenylyltransferase and sulfurtransferase uba4">
    <location>
        <begin position="1"/>
        <end position="493"/>
    </location>
</feature>
<feature type="domain" description="Rhodanese" evidence="3">
    <location>
        <begin position="376"/>
        <end position="491"/>
    </location>
</feature>
<feature type="active site" description="Glycyl thioester intermediate; for adenylyltransferase activity" evidence="3">
    <location>
        <position position="254"/>
    </location>
</feature>
<feature type="active site" description="Cysteine persulfide intermediate; for sulfurtransferase activity" evidence="3">
    <location>
        <position position="446"/>
    </location>
</feature>
<feature type="binding site" evidence="3">
    <location>
        <position position="99"/>
    </location>
    <ligand>
        <name>ATP</name>
        <dbReference type="ChEBI" id="CHEBI:30616"/>
    </ligand>
</feature>
<feature type="binding site" evidence="3">
    <location>
        <position position="120"/>
    </location>
    <ligand>
        <name>ATP</name>
        <dbReference type="ChEBI" id="CHEBI:30616"/>
    </ligand>
</feature>
<feature type="binding site" evidence="3">
    <location>
        <begin position="127"/>
        <end position="131"/>
    </location>
    <ligand>
        <name>ATP</name>
        <dbReference type="ChEBI" id="CHEBI:30616"/>
    </ligand>
</feature>
<feature type="binding site" evidence="3">
    <location>
        <position position="144"/>
    </location>
    <ligand>
        <name>ATP</name>
        <dbReference type="ChEBI" id="CHEBI:30616"/>
    </ligand>
</feature>
<feature type="binding site" evidence="3">
    <location>
        <begin position="188"/>
        <end position="189"/>
    </location>
    <ligand>
        <name>ATP</name>
        <dbReference type="ChEBI" id="CHEBI:30616"/>
    </ligand>
</feature>
<feature type="binding site" evidence="3">
    <location>
        <position position="237"/>
    </location>
    <ligand>
        <name>Zn(2+)</name>
        <dbReference type="ChEBI" id="CHEBI:29105"/>
    </ligand>
</feature>
<feature type="binding site" evidence="3">
    <location>
        <position position="240"/>
    </location>
    <ligand>
        <name>Zn(2+)</name>
        <dbReference type="ChEBI" id="CHEBI:29105"/>
    </ligand>
</feature>
<feature type="binding site" evidence="3">
    <location>
        <position position="316"/>
    </location>
    <ligand>
        <name>Zn(2+)</name>
        <dbReference type="ChEBI" id="CHEBI:29105"/>
    </ligand>
</feature>
<feature type="binding site" evidence="3">
    <location>
        <position position="319"/>
    </location>
    <ligand>
        <name>Zn(2+)</name>
        <dbReference type="ChEBI" id="CHEBI:29105"/>
    </ligand>
</feature>
<sequence length="493" mass="53454">MENLEQTCASLRAQIAATEAQLAGLKRELEIAEQAAEVKAQSTTRTITAEDGKTNETREWPLLSEEYKRYGRQMIVPQLGLQGQLKLRAARVLIVGAGGLGCPAALYLAGAGVGTLGLVDGDTVENSNLHRQVLHRSKNVGTFKVDSAIEYLRELNPHPTYVPYRAHLTPQEAPGIFKDYDIVLDCTDNPATRYLISDTAVLLGKPLVSASALRTEGQLMVLNYPPRPVGDKSGGPCYRCVFPKPPPANSVVSCADGGILGPVVGTMGVLQALEAIKVITSPAVNPSASPPSLLIFSAYSTPLFRTIRLRARRANCAVCSADASVTLETLKNGSTDYVFFCGVAGLEATLSPEERISPLEFKKRHPKEVPQDGGRINKEPTIIDVREKVQFDICSLENSINIPISTILSSASSPTNVDANAQPSLPFWLPRELASADSTDPIYVVCRHGNDSQIAVRRLKELGLDRGGQRYVGDIQGGLRAWREQIDPDWPEY</sequence>